<evidence type="ECO:0000255" key="1">
    <source>
        <dbReference type="HAMAP-Rule" id="MF_00113"/>
    </source>
</evidence>
<gene>
    <name evidence="1" type="primary">queA</name>
    <name type="ordered locus">BceJ2315_32420</name>
    <name type="ORF">BCAL3303</name>
</gene>
<dbReference type="EC" id="2.4.99.17" evidence="1"/>
<dbReference type="EMBL" id="AM747720">
    <property type="protein sequence ID" value="CAR53626.1"/>
    <property type="molecule type" value="Genomic_DNA"/>
</dbReference>
<dbReference type="RefSeq" id="WP_006482460.1">
    <property type="nucleotide sequence ID" value="NC_011000.1"/>
</dbReference>
<dbReference type="SMR" id="B4EE24"/>
<dbReference type="KEGG" id="bcj:BCAL3303"/>
<dbReference type="eggNOG" id="COG0809">
    <property type="taxonomic scope" value="Bacteria"/>
</dbReference>
<dbReference type="HOGENOM" id="CLU_039110_1_0_4"/>
<dbReference type="BioCyc" id="BCEN216591:G1G1V-3678-MONOMER"/>
<dbReference type="UniPathway" id="UPA00392"/>
<dbReference type="Proteomes" id="UP000001035">
    <property type="component" value="Chromosome 1"/>
</dbReference>
<dbReference type="GO" id="GO:0005737">
    <property type="term" value="C:cytoplasm"/>
    <property type="evidence" value="ECO:0007669"/>
    <property type="project" value="UniProtKB-SubCell"/>
</dbReference>
<dbReference type="GO" id="GO:0051075">
    <property type="term" value="F:S-adenosylmethionine:tRNA ribosyltransferase-isomerase activity"/>
    <property type="evidence" value="ECO:0007669"/>
    <property type="project" value="UniProtKB-EC"/>
</dbReference>
<dbReference type="GO" id="GO:0008616">
    <property type="term" value="P:queuosine biosynthetic process"/>
    <property type="evidence" value="ECO:0007669"/>
    <property type="project" value="UniProtKB-UniRule"/>
</dbReference>
<dbReference type="GO" id="GO:0002099">
    <property type="term" value="P:tRNA wobble guanine modification"/>
    <property type="evidence" value="ECO:0007669"/>
    <property type="project" value="TreeGrafter"/>
</dbReference>
<dbReference type="FunFam" id="3.40.1780.10:FF:000001">
    <property type="entry name" value="S-adenosylmethionine:tRNA ribosyltransferase-isomerase"/>
    <property type="match status" value="1"/>
</dbReference>
<dbReference type="Gene3D" id="2.40.10.240">
    <property type="entry name" value="QueA-like"/>
    <property type="match status" value="1"/>
</dbReference>
<dbReference type="Gene3D" id="3.40.1780.10">
    <property type="entry name" value="QueA-like"/>
    <property type="match status" value="1"/>
</dbReference>
<dbReference type="HAMAP" id="MF_00113">
    <property type="entry name" value="QueA"/>
    <property type="match status" value="1"/>
</dbReference>
<dbReference type="InterPro" id="IPR003699">
    <property type="entry name" value="QueA"/>
</dbReference>
<dbReference type="InterPro" id="IPR042118">
    <property type="entry name" value="QueA_dom1"/>
</dbReference>
<dbReference type="InterPro" id="IPR042119">
    <property type="entry name" value="QueA_dom2"/>
</dbReference>
<dbReference type="InterPro" id="IPR036100">
    <property type="entry name" value="QueA_sf"/>
</dbReference>
<dbReference type="NCBIfam" id="NF001140">
    <property type="entry name" value="PRK00147.1"/>
    <property type="match status" value="1"/>
</dbReference>
<dbReference type="NCBIfam" id="TIGR00113">
    <property type="entry name" value="queA"/>
    <property type="match status" value="1"/>
</dbReference>
<dbReference type="PANTHER" id="PTHR30307">
    <property type="entry name" value="S-ADENOSYLMETHIONINE:TRNA RIBOSYLTRANSFERASE-ISOMERASE"/>
    <property type="match status" value="1"/>
</dbReference>
<dbReference type="PANTHER" id="PTHR30307:SF0">
    <property type="entry name" value="S-ADENOSYLMETHIONINE:TRNA RIBOSYLTRANSFERASE-ISOMERASE"/>
    <property type="match status" value="1"/>
</dbReference>
<dbReference type="Pfam" id="PF02547">
    <property type="entry name" value="Queuosine_synth"/>
    <property type="match status" value="1"/>
</dbReference>
<dbReference type="SUPFAM" id="SSF111337">
    <property type="entry name" value="QueA-like"/>
    <property type="match status" value="1"/>
</dbReference>
<sequence length="355" mass="38912">MFTLSDFDFNLPPELIAQTALPDRTASRLLEVDRSVEPARLVDRHFAELPSCIAPGDLLVFNDTKVLKARFFGQKASGGKIEVLIERVTGTHTALAQIRASKSPGAGTTLRLADAFDVTVGERVEPFFTLHFPAPCLDLIEQYGRLPLPPYIEHDPDATDETRYQTVYASNPGAVAAPTAGLHFDQPLLEQLDALGVERATLTLHVGAGTFQPVRVDNIAEHKMHSEWYDLPQSLVDKIAATRARGGNVIAVGTTSMRALEAAARSADEAGRPLAATQAETDIFITPGYRFRVVDRLVTNFHLPKSTLLMLVSAFAGVETIRAAYRHAIEERYRFFSYGDAMLLTRRDTPEAPGA</sequence>
<organism>
    <name type="scientific">Burkholderia cenocepacia (strain ATCC BAA-245 / DSM 16553 / LMG 16656 / NCTC 13227 / J2315 / CF5610)</name>
    <name type="common">Burkholderia cepacia (strain J2315)</name>
    <dbReference type="NCBI Taxonomy" id="216591"/>
    <lineage>
        <taxon>Bacteria</taxon>
        <taxon>Pseudomonadati</taxon>
        <taxon>Pseudomonadota</taxon>
        <taxon>Betaproteobacteria</taxon>
        <taxon>Burkholderiales</taxon>
        <taxon>Burkholderiaceae</taxon>
        <taxon>Burkholderia</taxon>
        <taxon>Burkholderia cepacia complex</taxon>
    </lineage>
</organism>
<protein>
    <recommendedName>
        <fullName evidence="1">S-adenosylmethionine:tRNA ribosyltransferase-isomerase</fullName>
        <ecNumber evidence="1">2.4.99.17</ecNumber>
    </recommendedName>
    <alternativeName>
        <fullName evidence="1">Queuosine biosynthesis protein QueA</fullName>
    </alternativeName>
</protein>
<name>QUEA_BURCJ</name>
<feature type="chain" id="PRO_1000094756" description="S-adenosylmethionine:tRNA ribosyltransferase-isomerase">
    <location>
        <begin position="1"/>
        <end position="355"/>
    </location>
</feature>
<keyword id="KW-0963">Cytoplasm</keyword>
<keyword id="KW-0671">Queuosine biosynthesis</keyword>
<keyword id="KW-0949">S-adenosyl-L-methionine</keyword>
<keyword id="KW-0808">Transferase</keyword>
<accession>B4EE24</accession>
<reference key="1">
    <citation type="journal article" date="2009" name="J. Bacteriol.">
        <title>The genome of Burkholderia cenocepacia J2315, an epidemic pathogen of cystic fibrosis patients.</title>
        <authorList>
            <person name="Holden M.T."/>
            <person name="Seth-Smith H.M."/>
            <person name="Crossman L.C."/>
            <person name="Sebaihia M."/>
            <person name="Bentley S.D."/>
            <person name="Cerdeno-Tarraga A.M."/>
            <person name="Thomson N.R."/>
            <person name="Bason N."/>
            <person name="Quail M.A."/>
            <person name="Sharp S."/>
            <person name="Cherevach I."/>
            <person name="Churcher C."/>
            <person name="Goodhead I."/>
            <person name="Hauser H."/>
            <person name="Holroyd N."/>
            <person name="Mungall K."/>
            <person name="Scott P."/>
            <person name="Walker D."/>
            <person name="White B."/>
            <person name="Rose H."/>
            <person name="Iversen P."/>
            <person name="Mil-Homens D."/>
            <person name="Rocha E.P."/>
            <person name="Fialho A.M."/>
            <person name="Baldwin A."/>
            <person name="Dowson C."/>
            <person name="Barrell B.G."/>
            <person name="Govan J.R."/>
            <person name="Vandamme P."/>
            <person name="Hart C.A."/>
            <person name="Mahenthiralingam E."/>
            <person name="Parkhill J."/>
        </authorList>
    </citation>
    <scope>NUCLEOTIDE SEQUENCE [LARGE SCALE GENOMIC DNA]</scope>
    <source>
        <strain>ATCC BAA-245 / DSM 16553 / LMG 16656 / NCTC 13227 / J2315 / CF5610</strain>
    </source>
</reference>
<comment type="function">
    <text evidence="1">Transfers and isomerizes the ribose moiety from AdoMet to the 7-aminomethyl group of 7-deazaguanine (preQ1-tRNA) to give epoxyqueuosine (oQ-tRNA).</text>
</comment>
<comment type="catalytic activity">
    <reaction evidence="1">
        <text>7-aminomethyl-7-carbaguanosine(34) in tRNA + S-adenosyl-L-methionine = epoxyqueuosine(34) in tRNA + adenine + L-methionine + 2 H(+)</text>
        <dbReference type="Rhea" id="RHEA:32155"/>
        <dbReference type="Rhea" id="RHEA-COMP:10342"/>
        <dbReference type="Rhea" id="RHEA-COMP:18582"/>
        <dbReference type="ChEBI" id="CHEBI:15378"/>
        <dbReference type="ChEBI" id="CHEBI:16708"/>
        <dbReference type="ChEBI" id="CHEBI:57844"/>
        <dbReference type="ChEBI" id="CHEBI:59789"/>
        <dbReference type="ChEBI" id="CHEBI:82833"/>
        <dbReference type="ChEBI" id="CHEBI:194443"/>
        <dbReference type="EC" id="2.4.99.17"/>
    </reaction>
</comment>
<comment type="pathway">
    <text evidence="1">tRNA modification; tRNA-queuosine biosynthesis.</text>
</comment>
<comment type="subunit">
    <text evidence="1">Monomer.</text>
</comment>
<comment type="subcellular location">
    <subcellularLocation>
        <location evidence="1">Cytoplasm</location>
    </subcellularLocation>
</comment>
<comment type="similarity">
    <text evidence="1">Belongs to the QueA family.</text>
</comment>
<proteinExistence type="inferred from homology"/>